<evidence type="ECO:0000250" key="1">
    <source>
        <dbReference type="UniProtKB" id="P00785"/>
    </source>
</evidence>
<evidence type="ECO:0000250" key="2">
    <source>
        <dbReference type="UniProtKB" id="P25777"/>
    </source>
</evidence>
<evidence type="ECO:0000250" key="3">
    <source>
        <dbReference type="UniProtKB" id="P80884"/>
    </source>
</evidence>
<evidence type="ECO:0000250" key="4">
    <source>
        <dbReference type="UniProtKB" id="P84346"/>
    </source>
</evidence>
<evidence type="ECO:0000250" key="5">
    <source>
        <dbReference type="UniProtKB" id="V5LU01"/>
    </source>
</evidence>
<evidence type="ECO:0000255" key="6"/>
<evidence type="ECO:0000255" key="7">
    <source>
        <dbReference type="PROSITE-ProRule" id="PRU00498"/>
    </source>
</evidence>
<evidence type="ECO:0000255" key="8">
    <source>
        <dbReference type="PROSITE-ProRule" id="PRU10088"/>
    </source>
</evidence>
<evidence type="ECO:0000255" key="9">
    <source>
        <dbReference type="PROSITE-ProRule" id="PRU10089"/>
    </source>
</evidence>
<evidence type="ECO:0000255" key="10">
    <source>
        <dbReference type="PROSITE-ProRule" id="PRU10090"/>
    </source>
</evidence>
<evidence type="ECO:0000269" key="11">
    <source>
    </source>
</evidence>
<evidence type="ECO:0000269" key="12">
    <source>
    </source>
</evidence>
<evidence type="ECO:0000269" key="13">
    <source>
    </source>
</evidence>
<keyword id="KW-0217">Developmental protein</keyword>
<keyword id="KW-0221">Differentiation</keyword>
<keyword id="KW-1015">Disulfide bond</keyword>
<keyword id="KW-0287">Flowering</keyword>
<keyword id="KW-0325">Glycoprotein</keyword>
<keyword id="KW-0378">Hydrolase</keyword>
<keyword id="KW-0645">Protease</keyword>
<keyword id="KW-1185">Reference proteome</keyword>
<keyword id="KW-0732">Signal</keyword>
<keyword id="KW-0788">Thiol protease</keyword>
<keyword id="KW-0865">Zymogen</keyword>
<dbReference type="EC" id="3.4.22.-" evidence="3"/>
<dbReference type="EMBL" id="AL606619">
    <property type="protein sequence ID" value="CAE02828.2"/>
    <property type="molecule type" value="Genomic_DNA"/>
</dbReference>
<dbReference type="EMBL" id="AP008210">
    <property type="protein sequence ID" value="BAF16127.1"/>
    <property type="molecule type" value="Genomic_DNA"/>
</dbReference>
<dbReference type="EMBL" id="AP014960">
    <property type="protein sequence ID" value="BAS91556.1"/>
    <property type="molecule type" value="Genomic_DNA"/>
</dbReference>
<dbReference type="EMBL" id="AK107506">
    <property type="protein sequence ID" value="BAG98070.1"/>
    <property type="molecule type" value="mRNA"/>
</dbReference>
<dbReference type="RefSeq" id="XP_015637044.1">
    <property type="nucleotide sequence ID" value="XM_015781558.1"/>
</dbReference>
<dbReference type="SMR" id="Q7XR52"/>
<dbReference type="FunCoup" id="Q7XR52">
    <property type="interactions" value="515"/>
</dbReference>
<dbReference type="STRING" id="39947.Q7XR52"/>
<dbReference type="MEROPS" id="C01.029"/>
<dbReference type="GlyCosmos" id="Q7XR52">
    <property type="glycosylation" value="1 site, No reported glycans"/>
</dbReference>
<dbReference type="PaxDb" id="39947-Q7XR52"/>
<dbReference type="EnsemblPlants" id="Os04t0670500-01">
    <property type="protein sequence ID" value="Os04t0670500-01"/>
    <property type="gene ID" value="Os04g0670500"/>
</dbReference>
<dbReference type="Gramene" id="Os04t0670500-01">
    <property type="protein sequence ID" value="Os04t0670500-01"/>
    <property type="gene ID" value="Os04g0670500"/>
</dbReference>
<dbReference type="KEGG" id="dosa:Os04g0670500"/>
<dbReference type="eggNOG" id="KOG1543">
    <property type="taxonomic scope" value="Eukaryota"/>
</dbReference>
<dbReference type="eggNOG" id="KOG4296">
    <property type="taxonomic scope" value="Eukaryota"/>
</dbReference>
<dbReference type="HOGENOM" id="CLU_012184_0_2_1"/>
<dbReference type="InParanoid" id="Q7XR52"/>
<dbReference type="OMA" id="IARAGKC"/>
<dbReference type="OrthoDB" id="10253408at2759"/>
<dbReference type="PlantReactome" id="R-OSA-8986768">
    <property type="pathway name" value="Anther and pollen development"/>
</dbReference>
<dbReference type="Proteomes" id="UP000000763">
    <property type="component" value="Chromosome 4"/>
</dbReference>
<dbReference type="Proteomes" id="UP000059680">
    <property type="component" value="Chromosome 4"/>
</dbReference>
<dbReference type="GO" id="GO:0005615">
    <property type="term" value="C:extracellular space"/>
    <property type="evidence" value="ECO:0000318"/>
    <property type="project" value="GO_Central"/>
</dbReference>
<dbReference type="GO" id="GO:0005764">
    <property type="term" value="C:lysosome"/>
    <property type="evidence" value="ECO:0000318"/>
    <property type="project" value="GO_Central"/>
</dbReference>
<dbReference type="GO" id="GO:0004197">
    <property type="term" value="F:cysteine-type endopeptidase activity"/>
    <property type="evidence" value="ECO:0000318"/>
    <property type="project" value="GO_Central"/>
</dbReference>
<dbReference type="GO" id="GO:0030154">
    <property type="term" value="P:cell differentiation"/>
    <property type="evidence" value="ECO:0007669"/>
    <property type="project" value="UniProtKB-KW"/>
</dbReference>
<dbReference type="GO" id="GO:0009908">
    <property type="term" value="P:flower development"/>
    <property type="evidence" value="ECO:0007669"/>
    <property type="project" value="UniProtKB-KW"/>
</dbReference>
<dbReference type="GO" id="GO:0009555">
    <property type="term" value="P:pollen development"/>
    <property type="evidence" value="ECO:0000315"/>
    <property type="project" value="UniProtKB"/>
</dbReference>
<dbReference type="GO" id="GO:0051603">
    <property type="term" value="P:proteolysis involved in protein catabolic process"/>
    <property type="evidence" value="ECO:0000318"/>
    <property type="project" value="GO_Central"/>
</dbReference>
<dbReference type="CDD" id="cd02248">
    <property type="entry name" value="Peptidase_C1A"/>
    <property type="match status" value="1"/>
</dbReference>
<dbReference type="FunFam" id="2.10.25.160:FF:000002">
    <property type="entry name" value="Cysteine protease 1"/>
    <property type="match status" value="1"/>
</dbReference>
<dbReference type="FunFam" id="3.90.70.10:FF:000068">
    <property type="entry name" value="Cysteine protease 1"/>
    <property type="match status" value="1"/>
</dbReference>
<dbReference type="Gene3D" id="3.90.70.10">
    <property type="entry name" value="Cysteine proteinases"/>
    <property type="match status" value="1"/>
</dbReference>
<dbReference type="Gene3D" id="2.10.25.160">
    <property type="entry name" value="Granulin"/>
    <property type="match status" value="1"/>
</dbReference>
<dbReference type="InterPro" id="IPR000118">
    <property type="entry name" value="Granulin"/>
</dbReference>
<dbReference type="InterPro" id="IPR037277">
    <property type="entry name" value="Granulin_sf"/>
</dbReference>
<dbReference type="InterPro" id="IPR038765">
    <property type="entry name" value="Papain-like_cys_pep_sf"/>
</dbReference>
<dbReference type="InterPro" id="IPR025661">
    <property type="entry name" value="Pept_asp_AS"/>
</dbReference>
<dbReference type="InterPro" id="IPR000169">
    <property type="entry name" value="Pept_cys_AS"/>
</dbReference>
<dbReference type="InterPro" id="IPR025660">
    <property type="entry name" value="Pept_his_AS"/>
</dbReference>
<dbReference type="InterPro" id="IPR013128">
    <property type="entry name" value="Peptidase_C1A"/>
</dbReference>
<dbReference type="InterPro" id="IPR000668">
    <property type="entry name" value="Peptidase_C1A_C"/>
</dbReference>
<dbReference type="InterPro" id="IPR039417">
    <property type="entry name" value="Peptidase_C1A_papain-like"/>
</dbReference>
<dbReference type="InterPro" id="IPR013201">
    <property type="entry name" value="Prot_inhib_I29"/>
</dbReference>
<dbReference type="PANTHER" id="PTHR12411">
    <property type="entry name" value="CYSTEINE PROTEASE FAMILY C1-RELATED"/>
    <property type="match status" value="1"/>
</dbReference>
<dbReference type="Pfam" id="PF00396">
    <property type="entry name" value="Granulin"/>
    <property type="match status" value="1"/>
</dbReference>
<dbReference type="Pfam" id="PF08246">
    <property type="entry name" value="Inhibitor_I29"/>
    <property type="match status" value="1"/>
</dbReference>
<dbReference type="Pfam" id="PF00112">
    <property type="entry name" value="Peptidase_C1"/>
    <property type="match status" value="1"/>
</dbReference>
<dbReference type="PRINTS" id="PR00705">
    <property type="entry name" value="PAPAIN"/>
</dbReference>
<dbReference type="SMART" id="SM00277">
    <property type="entry name" value="GRAN"/>
    <property type="match status" value="1"/>
</dbReference>
<dbReference type="SMART" id="SM00848">
    <property type="entry name" value="Inhibitor_I29"/>
    <property type="match status" value="1"/>
</dbReference>
<dbReference type="SMART" id="SM00645">
    <property type="entry name" value="Pept_C1"/>
    <property type="match status" value="1"/>
</dbReference>
<dbReference type="SUPFAM" id="SSF54001">
    <property type="entry name" value="Cysteine proteinases"/>
    <property type="match status" value="1"/>
</dbReference>
<dbReference type="SUPFAM" id="SSF57277">
    <property type="entry name" value="Granulin repeat"/>
    <property type="match status" value="1"/>
</dbReference>
<dbReference type="PROSITE" id="PS00118">
    <property type="entry name" value="PA2_HIS"/>
    <property type="match status" value="1"/>
</dbReference>
<dbReference type="PROSITE" id="PS00640">
    <property type="entry name" value="THIOL_PROTEASE_ASN"/>
    <property type="match status" value="1"/>
</dbReference>
<dbReference type="PROSITE" id="PS00139">
    <property type="entry name" value="THIOL_PROTEASE_CYS"/>
    <property type="match status" value="1"/>
</dbReference>
<dbReference type="PROSITE" id="PS00639">
    <property type="entry name" value="THIOL_PROTEASE_HIS"/>
    <property type="match status" value="1"/>
</dbReference>
<feature type="signal peptide" evidence="6">
    <location>
        <begin position="1"/>
        <end position="31"/>
    </location>
</feature>
<feature type="propeptide" id="PRO_0000026438" description="Activation peptide" evidence="1">
    <location>
        <begin position="32"/>
        <end position="154"/>
    </location>
</feature>
<feature type="chain" id="PRO_0000026439" description="Cysteine protease 1">
    <location>
        <begin position="155"/>
        <end position="378"/>
    </location>
</feature>
<feature type="propeptide" id="PRO_0000046022" description="Removed in mature form" evidence="5">
    <location>
        <begin position="379"/>
        <end position="490"/>
    </location>
</feature>
<feature type="active site" evidence="8">
    <location>
        <position position="180"/>
    </location>
</feature>
<feature type="active site" evidence="9">
    <location>
        <position position="317"/>
    </location>
</feature>
<feature type="active site" evidence="10">
    <location>
        <position position="339"/>
    </location>
</feature>
<feature type="glycosylation site" description="N-linked (GlcNAc...) asparagine" evidence="7">
    <location>
        <position position="356"/>
    </location>
</feature>
<feature type="disulfide bond" evidence="4">
    <location>
        <begin position="177"/>
        <end position="220"/>
    </location>
</feature>
<feature type="disulfide bond" evidence="4">
    <location>
        <begin position="211"/>
        <end position="253"/>
    </location>
</feature>
<feature type="disulfide bond" evidence="4">
    <location>
        <begin position="311"/>
        <end position="364"/>
    </location>
</feature>
<feature type="disulfide bond" evidence="2">
    <location>
        <begin position="395"/>
        <end position="407"/>
    </location>
</feature>
<feature type="disulfide bond" evidence="2">
    <location>
        <begin position="401"/>
        <end position="422"/>
    </location>
</feature>
<protein>
    <recommendedName>
        <fullName>Cysteine protease 1</fullName>
        <ecNumber evidence="3">3.4.22.-</ecNumber>
    </recommendedName>
    <alternativeName>
        <fullName>OsCP1</fullName>
    </alternativeName>
</protein>
<proteinExistence type="evidence at transcript level"/>
<gene>
    <name type="primary">CP1</name>
    <name type="ordered locus">Os04g0670500</name>
    <name type="ordered locus">LOC_Os04g57490</name>
    <name type="ORF">OSJNBa0043A12.33</name>
</gene>
<reference key="1">
    <citation type="journal article" date="2002" name="Nature">
        <title>Sequence and analysis of rice chromosome 4.</title>
        <authorList>
            <person name="Feng Q."/>
            <person name="Zhang Y."/>
            <person name="Hao P."/>
            <person name="Wang S."/>
            <person name="Fu G."/>
            <person name="Huang Y."/>
            <person name="Li Y."/>
            <person name="Zhu J."/>
            <person name="Liu Y."/>
            <person name="Hu X."/>
            <person name="Jia P."/>
            <person name="Zhang Y."/>
            <person name="Zhao Q."/>
            <person name="Ying K."/>
            <person name="Yu S."/>
            <person name="Tang Y."/>
            <person name="Weng Q."/>
            <person name="Zhang L."/>
            <person name="Lu Y."/>
            <person name="Mu J."/>
            <person name="Lu Y."/>
            <person name="Zhang L.S."/>
            <person name="Yu Z."/>
            <person name="Fan D."/>
            <person name="Liu X."/>
            <person name="Lu T."/>
            <person name="Li C."/>
            <person name="Wu Y."/>
            <person name="Sun T."/>
            <person name="Lei H."/>
            <person name="Li T."/>
            <person name="Hu H."/>
            <person name="Guan J."/>
            <person name="Wu M."/>
            <person name="Zhang R."/>
            <person name="Zhou B."/>
            <person name="Chen Z."/>
            <person name="Chen L."/>
            <person name="Jin Z."/>
            <person name="Wang R."/>
            <person name="Yin H."/>
            <person name="Cai Z."/>
            <person name="Ren S."/>
            <person name="Lv G."/>
            <person name="Gu W."/>
            <person name="Zhu G."/>
            <person name="Tu Y."/>
            <person name="Jia J."/>
            <person name="Zhang Y."/>
            <person name="Chen J."/>
            <person name="Kang H."/>
            <person name="Chen X."/>
            <person name="Shao C."/>
            <person name="Sun Y."/>
            <person name="Hu Q."/>
            <person name="Zhang X."/>
            <person name="Zhang W."/>
            <person name="Wang L."/>
            <person name="Ding C."/>
            <person name="Sheng H."/>
            <person name="Gu J."/>
            <person name="Chen S."/>
            <person name="Ni L."/>
            <person name="Zhu F."/>
            <person name="Chen W."/>
            <person name="Lan L."/>
            <person name="Lai Y."/>
            <person name="Cheng Z."/>
            <person name="Gu M."/>
            <person name="Jiang J."/>
            <person name="Li J."/>
            <person name="Hong G."/>
            <person name="Xue Y."/>
            <person name="Han B."/>
        </authorList>
    </citation>
    <scope>NUCLEOTIDE SEQUENCE [LARGE SCALE GENOMIC DNA]</scope>
    <source>
        <strain>cv. Nipponbare</strain>
    </source>
</reference>
<reference key="2">
    <citation type="journal article" date="2005" name="Nature">
        <title>The map-based sequence of the rice genome.</title>
        <authorList>
            <consortium name="International rice genome sequencing project (IRGSP)"/>
        </authorList>
    </citation>
    <scope>NUCLEOTIDE SEQUENCE [LARGE SCALE GENOMIC DNA]</scope>
    <source>
        <strain>cv. Nipponbare</strain>
    </source>
</reference>
<reference key="3">
    <citation type="journal article" date="2008" name="Nucleic Acids Res.">
        <title>The rice annotation project database (RAP-DB): 2008 update.</title>
        <authorList>
            <consortium name="The rice annotation project (RAP)"/>
        </authorList>
    </citation>
    <scope>GENOME REANNOTATION</scope>
    <source>
        <strain>cv. Nipponbare</strain>
    </source>
</reference>
<reference key="4">
    <citation type="journal article" date="2013" name="Rice">
        <title>Improvement of the Oryza sativa Nipponbare reference genome using next generation sequence and optical map data.</title>
        <authorList>
            <person name="Kawahara Y."/>
            <person name="de la Bastide M."/>
            <person name="Hamilton J.P."/>
            <person name="Kanamori H."/>
            <person name="McCombie W.R."/>
            <person name="Ouyang S."/>
            <person name="Schwartz D.C."/>
            <person name="Tanaka T."/>
            <person name="Wu J."/>
            <person name="Zhou S."/>
            <person name="Childs K.L."/>
            <person name="Davidson R.M."/>
            <person name="Lin H."/>
            <person name="Quesada-Ocampo L."/>
            <person name="Vaillancourt B."/>
            <person name="Sakai H."/>
            <person name="Lee S.S."/>
            <person name="Kim J."/>
            <person name="Numa H."/>
            <person name="Itoh T."/>
            <person name="Buell C.R."/>
            <person name="Matsumoto T."/>
        </authorList>
    </citation>
    <scope>GENOME REANNOTATION</scope>
    <source>
        <strain>cv. Nipponbare</strain>
    </source>
</reference>
<reference key="5">
    <citation type="journal article" date="2003" name="Science">
        <title>Collection, mapping, and annotation of over 28,000 cDNA clones from japonica rice.</title>
        <authorList>
            <consortium name="The rice full-length cDNA consortium"/>
        </authorList>
    </citation>
    <scope>NUCLEOTIDE SEQUENCE [LARGE SCALE MRNA]</scope>
    <source>
        <strain>cv. Nipponbare</strain>
    </source>
</reference>
<reference key="6">
    <citation type="journal article" date="2004" name="Plant Mol. Biol.">
        <title>Isolation and characterization of a rice cysteine protease gene, OsCP1, using T-DNA gene-trap system.</title>
        <authorList>
            <person name="Lee S."/>
            <person name="Jung K.-H."/>
            <person name="An G."/>
            <person name="Chung Y.-Y."/>
        </authorList>
    </citation>
    <scope>FUNCTION</scope>
    <scope>DEVELOPMENTAL STAGE</scope>
    <scope>TISSUE SPECIFICITY</scope>
    <scope>DISRUPTION PHENOTYPE</scope>
    <source>
        <strain>cv. Nipponbare</strain>
    </source>
</reference>
<reference key="7">
    <citation type="journal article" date="2005" name="Plant Cell">
        <title>Rice undeveloped tapetum1 is a major regulator of early tapetum development.</title>
        <authorList>
            <person name="Jung K.H."/>
            <person name="Han M.J."/>
            <person name="Lee Y.S."/>
            <person name="Kim Y.W."/>
            <person name="Hwang I."/>
            <person name="Kim M.J."/>
            <person name="Kim Y.K."/>
            <person name="Nahm B.H."/>
            <person name="An G."/>
        </authorList>
    </citation>
    <scope>FUNCTION</scope>
</reference>
<reference key="8">
    <citation type="journal article" date="2006" name="Plant Cell">
        <title>The rice tapetum degeneration retardation gene is required for tapetum degradation and anther development.</title>
        <authorList>
            <person name="Li N."/>
            <person name="Zhang D.S."/>
            <person name="Liu H.S."/>
            <person name="Yin C.S."/>
            <person name="Li X.X."/>
            <person name="Liang W.Q."/>
            <person name="Yuan Z."/>
            <person name="Xu B."/>
            <person name="Chu H.W."/>
            <person name="Wang J."/>
            <person name="Wen T.Q."/>
            <person name="Huang H."/>
            <person name="Luo D."/>
            <person name="Ma H."/>
            <person name="Zhang D.B."/>
        </authorList>
    </citation>
    <scope>FUNCTION</scope>
</reference>
<accession>Q7XR52</accession>
<accession>Q0J960</accession>
<name>CYSP1_ORYSJ</name>
<sequence length="490" mass="52642">MAGGGGKSVAAALAMACFLLILAAFAPPAAAAPPDIMSIIRYNAEHGVRGLERTEAEARAAYDLWLARHRRGGGGGSRNGFIGEHERRFRVFWDNLKFVDAHNARADERGGFRLGMNRFADLTNGEFRATYLGTTPAGRGRRVGEAYRHDGVEALPDSVDWRDKGAVVAPVKNQGQCGSCWAFSAVAAVEGINKIVTGELVSLSEQELVECARNGQNSGCNGGIMDDAFAFIARNGGLDTEEDYPYTAMDGKCNLAKRSRKVVSIDGFEDVPENDELSLQKAVAHQPVSVAIDAGGREFQLYDSGVFTGRCGTNLDHGVVAVGYGTDAATGAAYWTVRNSWGPDWGENGYIRMERNVTARTGKCGIAMMASYPIKKGPNPKPSPPSPAPSPPQQCDRYSKCPAGTTCCCNYGIRNHCIVWGCCPVEGATCCKDHSTCCPKEYPVCNAKARTCSKSKNSPYNIRTPAAMARSVPEQPDSISFVVLNREDLV</sequence>
<organism>
    <name type="scientific">Oryza sativa subsp. japonica</name>
    <name type="common">Rice</name>
    <dbReference type="NCBI Taxonomy" id="39947"/>
    <lineage>
        <taxon>Eukaryota</taxon>
        <taxon>Viridiplantae</taxon>
        <taxon>Streptophyta</taxon>
        <taxon>Embryophyta</taxon>
        <taxon>Tracheophyta</taxon>
        <taxon>Spermatophyta</taxon>
        <taxon>Magnoliopsida</taxon>
        <taxon>Liliopsida</taxon>
        <taxon>Poales</taxon>
        <taxon>Poaceae</taxon>
        <taxon>BOP clade</taxon>
        <taxon>Oryzoideae</taxon>
        <taxon>Oryzeae</taxon>
        <taxon>Oryzinae</taxon>
        <taxon>Oryza</taxon>
        <taxon>Oryza sativa</taxon>
    </lineage>
</organism>
<comment type="function">
    <text evidence="11 12 13">Cysteine protease that may play a role in pollen development (PubMed:15356393). May be regulated by the transcription factor UDT1 in developing anthers and play a role in tapetum development (PubMed:16141453). Positively regulated by the transcription factor TDR in developing anthers and may play a role in tapetum programmed cell death (PCD) (PubMed:17138695).</text>
</comment>
<comment type="tissue specificity">
    <text evidence="11">Highly expressed in the tapetum and developing pollen of the anther locules. Weakly expressed in root and germinating seed, hardly in the anther-less-flower and not detected in leaf.</text>
</comment>
<comment type="disruption phenotype">
    <text evidence="11">Plants show overall delay of growth and development, and mature plants are dwarf. Panicle of CP1 mutant contains several flowers which remain unfertilized due to the abnormal development of the pollen.</text>
</comment>
<comment type="similarity">
    <text evidence="8 9 10">Belongs to the peptidase C1 family.</text>
</comment>